<dbReference type="EC" id="4.2.1.68" evidence="1"/>
<dbReference type="EMBL" id="BC072148">
    <property type="protein sequence ID" value="AAH72148.1"/>
    <property type="molecule type" value="mRNA"/>
</dbReference>
<dbReference type="RefSeq" id="NP_001085066.1">
    <property type="nucleotide sequence ID" value="NM_001091597.1"/>
</dbReference>
<dbReference type="SMR" id="Q6INX4"/>
<dbReference type="DNASU" id="432136"/>
<dbReference type="GeneID" id="432136"/>
<dbReference type="KEGG" id="xla:432136"/>
<dbReference type="AGR" id="Xenbase:XB-GENE-940743"/>
<dbReference type="CTD" id="432136"/>
<dbReference type="Xenbase" id="XB-GENE-940743">
    <property type="gene designation" value="enosf1.S"/>
</dbReference>
<dbReference type="OrthoDB" id="14161at2759"/>
<dbReference type="Proteomes" id="UP000186698">
    <property type="component" value="Chromosome 6S"/>
</dbReference>
<dbReference type="Bgee" id="432136">
    <property type="expression patterns" value="Expressed in kidney and 19 other cell types or tissues"/>
</dbReference>
<dbReference type="GO" id="GO:0005739">
    <property type="term" value="C:mitochondrion"/>
    <property type="evidence" value="ECO:0007669"/>
    <property type="project" value="UniProtKB-SubCell"/>
</dbReference>
<dbReference type="GO" id="GO:0016836">
    <property type="term" value="F:hydro-lyase activity"/>
    <property type="evidence" value="ECO:0000318"/>
    <property type="project" value="GO_Central"/>
</dbReference>
<dbReference type="GO" id="GO:0016853">
    <property type="term" value="F:isomerase activity"/>
    <property type="evidence" value="ECO:0007669"/>
    <property type="project" value="UniProtKB-KW"/>
</dbReference>
<dbReference type="GO" id="GO:0050023">
    <property type="term" value="F:L-fuconate dehydratase activity"/>
    <property type="evidence" value="ECO:0000250"/>
    <property type="project" value="UniProtKB"/>
</dbReference>
<dbReference type="GO" id="GO:0000287">
    <property type="term" value="F:magnesium ion binding"/>
    <property type="evidence" value="ECO:0000250"/>
    <property type="project" value="UniProtKB"/>
</dbReference>
<dbReference type="GO" id="GO:0016052">
    <property type="term" value="P:carbohydrate catabolic process"/>
    <property type="evidence" value="ECO:0000250"/>
    <property type="project" value="UniProtKB"/>
</dbReference>
<dbReference type="CDD" id="cd03324">
    <property type="entry name" value="rTSbeta_L-fuconate_dehydratase"/>
    <property type="match status" value="1"/>
</dbReference>
<dbReference type="FunFam" id="3.20.20.120:FF:000007">
    <property type="entry name" value="Mitochondrial enolase superfamily member 1"/>
    <property type="match status" value="1"/>
</dbReference>
<dbReference type="Gene3D" id="3.20.20.120">
    <property type="entry name" value="Enolase-like C-terminal domain"/>
    <property type="match status" value="1"/>
</dbReference>
<dbReference type="Gene3D" id="3.30.390.10">
    <property type="entry name" value="Enolase-like, N-terminal domain"/>
    <property type="match status" value="1"/>
</dbReference>
<dbReference type="InterPro" id="IPR036849">
    <property type="entry name" value="Enolase-like_C_sf"/>
</dbReference>
<dbReference type="InterPro" id="IPR029017">
    <property type="entry name" value="Enolase-like_N"/>
</dbReference>
<dbReference type="InterPro" id="IPR029065">
    <property type="entry name" value="Enolase_C-like"/>
</dbReference>
<dbReference type="InterPro" id="IPR034610">
    <property type="entry name" value="L-fuconate_dehydratase"/>
</dbReference>
<dbReference type="InterPro" id="IPR013342">
    <property type="entry name" value="Mandelate_racemase_C"/>
</dbReference>
<dbReference type="InterPro" id="IPR013341">
    <property type="entry name" value="Mandelate_racemase_N_dom"/>
</dbReference>
<dbReference type="InterPro" id="IPR046945">
    <property type="entry name" value="RHMD-like"/>
</dbReference>
<dbReference type="PANTHER" id="PTHR13794">
    <property type="entry name" value="ENOLASE SUPERFAMILY, MANDELATE RACEMASE"/>
    <property type="match status" value="1"/>
</dbReference>
<dbReference type="PANTHER" id="PTHR13794:SF58">
    <property type="entry name" value="MITOCHONDRIAL ENOLASE SUPERFAMILY MEMBER 1"/>
    <property type="match status" value="1"/>
</dbReference>
<dbReference type="Pfam" id="PF13378">
    <property type="entry name" value="MR_MLE_C"/>
    <property type="match status" value="1"/>
</dbReference>
<dbReference type="Pfam" id="PF02746">
    <property type="entry name" value="MR_MLE_N"/>
    <property type="match status" value="1"/>
</dbReference>
<dbReference type="SFLD" id="SFLDF00111">
    <property type="entry name" value="L-fuconate_dehydratase"/>
    <property type="match status" value="1"/>
</dbReference>
<dbReference type="SFLD" id="SFLDG00179">
    <property type="entry name" value="mandelate_racemase"/>
    <property type="match status" value="1"/>
</dbReference>
<dbReference type="SMART" id="SM00922">
    <property type="entry name" value="MR_MLE"/>
    <property type="match status" value="1"/>
</dbReference>
<dbReference type="SUPFAM" id="SSF51604">
    <property type="entry name" value="Enolase C-terminal domain-like"/>
    <property type="match status" value="1"/>
</dbReference>
<dbReference type="SUPFAM" id="SSF54826">
    <property type="entry name" value="Enolase N-terminal domain-like"/>
    <property type="match status" value="1"/>
</dbReference>
<organism>
    <name type="scientific">Xenopus laevis</name>
    <name type="common">African clawed frog</name>
    <dbReference type="NCBI Taxonomy" id="8355"/>
    <lineage>
        <taxon>Eukaryota</taxon>
        <taxon>Metazoa</taxon>
        <taxon>Chordata</taxon>
        <taxon>Craniata</taxon>
        <taxon>Vertebrata</taxon>
        <taxon>Euteleostomi</taxon>
        <taxon>Amphibia</taxon>
        <taxon>Batrachia</taxon>
        <taxon>Anura</taxon>
        <taxon>Pipoidea</taxon>
        <taxon>Pipidae</taxon>
        <taxon>Xenopodinae</taxon>
        <taxon>Xenopus</taxon>
        <taxon>Xenopus</taxon>
    </lineage>
</organism>
<gene>
    <name type="primary">enosf1</name>
</gene>
<proteinExistence type="evidence at transcript level"/>
<sequence length="445" mass="50247">MITGKITCLHITDVRFPTSLDQHGSDAMHTDPDYSAAYVVIETDAADGLKGHGLTFTLGKGTEVVVCAVRALSRHVIGKALEDIVNNFRDFYRQLTSDGQLRWIGPEKGAVQLATAAVLNAVWDLWAKKEKKPLWKLLVDMDPHQLVSCIDFRYITDALTEEEALKILQNGKQGQRDREEHMLTSGYPAYTTSCAWLGYSDEQLKKLCSDALKEGWTRFKVKVGADLKDDIRRCELIRDMIGPDNIMMLDANQRWDVQEAISWVKDLAKYKPLWIEEPTSPDDILGHATISKELSPVNIGVATGEQCHNRVMFKQFLQAKALQYLQIDSCRLGSVNENLSVLLMAKKFNVPVCPHAGGVGLCELVQHLILFDYICVSGSLDNRMCEYVDHLHEHFTYPVIINRAAYMPPKDPGYSTEMKEESVLQYQFPDGAVWKKLILEKKVEV</sequence>
<evidence type="ECO:0000250" key="1">
    <source>
        <dbReference type="UniProtKB" id="Q7L5Y1"/>
    </source>
</evidence>
<evidence type="ECO:0000250" key="2">
    <source>
        <dbReference type="UniProtKB" id="Q8P3K2"/>
    </source>
</evidence>
<evidence type="ECO:0000255" key="3"/>
<evidence type="ECO:0000305" key="4"/>
<feature type="chain" id="PRO_0000331654" description="Mitochondrial enolase superfamily member 1">
    <location>
        <begin position="1"/>
        <end position="445"/>
    </location>
</feature>
<feature type="active site" description="Proton donor/acceptor" evidence="2">
    <location>
        <position position="222"/>
    </location>
</feature>
<feature type="active site" evidence="3">
    <location>
        <position position="355"/>
    </location>
</feature>
<feature type="binding site" evidence="2">
    <location>
        <begin position="24"/>
        <end position="26"/>
    </location>
    <ligand>
        <name>substrate</name>
    </ligand>
</feature>
<feature type="binding site" evidence="2">
    <location>
        <position position="34"/>
    </location>
    <ligand>
        <name>substrate</name>
    </ligand>
</feature>
<feature type="binding site" evidence="2">
    <location>
        <position position="220"/>
    </location>
    <ligand>
        <name>substrate</name>
    </ligand>
</feature>
<feature type="binding site" evidence="1">
    <location>
        <position position="250"/>
    </location>
    <ligand>
        <name>Mg(2+)</name>
        <dbReference type="ChEBI" id="CHEBI:18420"/>
    </ligand>
</feature>
<feature type="binding site" evidence="2">
    <location>
        <position position="252"/>
    </location>
    <ligand>
        <name>substrate</name>
    </ligand>
</feature>
<feature type="binding site" evidence="1">
    <location>
        <position position="276"/>
    </location>
    <ligand>
        <name>Mg(2+)</name>
        <dbReference type="ChEBI" id="CHEBI:18420"/>
    </ligand>
</feature>
<feature type="binding site" evidence="2">
    <location>
        <position position="276"/>
    </location>
    <ligand>
        <name>substrate</name>
    </ligand>
</feature>
<feature type="binding site" evidence="1">
    <location>
        <position position="305"/>
    </location>
    <ligand>
        <name>Mg(2+)</name>
        <dbReference type="ChEBI" id="CHEBI:18420"/>
    </ligand>
</feature>
<feature type="binding site" evidence="2">
    <location>
        <position position="305"/>
    </location>
    <ligand>
        <name>substrate</name>
    </ligand>
</feature>
<feature type="binding site" evidence="2">
    <location>
        <begin position="355"/>
        <end position="357"/>
    </location>
    <ligand>
        <name>substrate</name>
    </ligand>
</feature>
<feature type="binding site" evidence="2">
    <location>
        <position position="386"/>
    </location>
    <ligand>
        <name>substrate</name>
    </ligand>
</feature>
<keyword id="KW-0413">Isomerase</keyword>
<keyword id="KW-0456">Lyase</keyword>
<keyword id="KW-0460">Magnesium</keyword>
<keyword id="KW-0479">Metal-binding</keyword>
<keyword id="KW-0496">Mitochondrion</keyword>
<keyword id="KW-1185">Reference proteome</keyword>
<reference key="1">
    <citation type="submission" date="2004-06" db="EMBL/GenBank/DDBJ databases">
        <authorList>
            <consortium name="NIH - Xenopus Gene Collection (XGC) project"/>
        </authorList>
    </citation>
    <scope>NUCLEOTIDE SEQUENCE [LARGE SCALE MRNA]</scope>
    <source>
        <tissue>Embryo</tissue>
    </source>
</reference>
<name>ENOF1_XENLA</name>
<protein>
    <recommendedName>
        <fullName>Mitochondrial enolase superfamily member 1</fullName>
    </recommendedName>
    <alternativeName>
        <fullName>L-fuconate dehydratase</fullName>
        <ecNumber evidence="1">4.2.1.68</ecNumber>
    </alternativeName>
</protein>
<accession>Q6INX4</accession>
<comment type="function">
    <text evidence="1">Plays a role in the catabolism of L-fucose, a sugar that is part of the carbohydrates that are attached to cellular glycoproteins. Catalyzes the dehydration of L-fuconate to 2-keto-3-deoxy-L-fuconate by the abstraction of the 2-proton to generate an enediolate intermediate that is stabilized by the magnesium ion. May down-regulate thymidylate synthase activity, possibly already at the RNA level, by promoting the degradation of TYMS mRNA via an antisense RNA-based mechanism.</text>
</comment>
<comment type="catalytic activity">
    <reaction evidence="1">
        <text>L-fuconate = 2-dehydro-3-deoxy-L-fuconate + H2O</text>
        <dbReference type="Rhea" id="RHEA:22772"/>
        <dbReference type="ChEBI" id="CHEBI:15377"/>
        <dbReference type="ChEBI" id="CHEBI:21291"/>
        <dbReference type="ChEBI" id="CHEBI:37448"/>
        <dbReference type="EC" id="4.2.1.68"/>
    </reaction>
</comment>
<comment type="cofactor">
    <cofactor evidence="1">
        <name>Mg(2+)</name>
        <dbReference type="ChEBI" id="CHEBI:18420"/>
    </cofactor>
    <text evidence="1">Binds 1 Mg(2+) ion per subunit.</text>
</comment>
<comment type="subcellular location">
    <subcellularLocation>
        <location evidence="1">Mitochondrion</location>
    </subcellularLocation>
</comment>
<comment type="similarity">
    <text evidence="4">Belongs to the mandelate racemase/muconate lactonizing enzyme family. ENOSF1 subfamily.</text>
</comment>